<name>BGL42_ARATH</name>
<evidence type="ECO:0000250" key="1">
    <source>
        <dbReference type="UniProtKB" id="Q1XH05"/>
    </source>
</evidence>
<evidence type="ECO:0000250" key="2">
    <source>
        <dbReference type="UniProtKB" id="Q8GU20"/>
    </source>
</evidence>
<evidence type="ECO:0000250" key="3">
    <source>
        <dbReference type="UniProtKB" id="Q8L7J2"/>
    </source>
</evidence>
<evidence type="ECO:0000250" key="4">
    <source>
        <dbReference type="UniProtKB" id="Q9SPP9"/>
    </source>
</evidence>
<evidence type="ECO:0000255" key="5"/>
<evidence type="ECO:0000255" key="6">
    <source>
        <dbReference type="PROSITE-ProRule" id="PRU00498"/>
    </source>
</evidence>
<evidence type="ECO:0000269" key="7">
    <source>
    </source>
</evidence>
<evidence type="ECO:0000269" key="8">
    <source>
    </source>
</evidence>
<evidence type="ECO:0000303" key="9">
    <source>
    </source>
</evidence>
<evidence type="ECO:0000305" key="10"/>
<evidence type="ECO:0000312" key="11">
    <source>
        <dbReference type="Araport" id="AT5G36890"/>
    </source>
</evidence>
<evidence type="ECO:0000312" key="12">
    <source>
        <dbReference type="EMBL" id="BAB11630.1"/>
    </source>
</evidence>
<evidence type="ECO:0007829" key="13">
    <source>
        <dbReference type="PDB" id="7F3A"/>
    </source>
</evidence>
<dbReference type="EC" id="3.2.1.21" evidence="8"/>
<dbReference type="EMBL" id="AB016877">
    <property type="protein sequence ID" value="BAB11630.1"/>
    <property type="molecule type" value="Genomic_DNA"/>
</dbReference>
<dbReference type="EMBL" id="CP002688">
    <property type="protein sequence ID" value="AED94122.1"/>
    <property type="molecule type" value="Genomic_DNA"/>
</dbReference>
<dbReference type="EMBL" id="CP002688">
    <property type="protein sequence ID" value="AED94123.1"/>
    <property type="molecule type" value="Genomic_DNA"/>
</dbReference>
<dbReference type="EMBL" id="BT010611">
    <property type="protein sequence ID" value="AAQ89633.1"/>
    <property type="molecule type" value="mRNA"/>
</dbReference>
<dbReference type="EMBL" id="AK175760">
    <property type="protein sequence ID" value="BAD43523.1"/>
    <property type="molecule type" value="mRNA"/>
</dbReference>
<dbReference type="RefSeq" id="NP_001031975.1">
    <molecule id="Q9FIW4-2"/>
    <property type="nucleotide sequence ID" value="NM_001036898.2"/>
</dbReference>
<dbReference type="RefSeq" id="NP_198505.2">
    <molecule id="Q9FIW4-1"/>
    <property type="nucleotide sequence ID" value="NM_123047.4"/>
</dbReference>
<dbReference type="PDB" id="7F3A">
    <property type="method" value="X-ray"/>
    <property type="resolution" value="1.70 A"/>
    <property type="chains" value="A=1-490"/>
</dbReference>
<dbReference type="PDBsum" id="7F3A"/>
<dbReference type="SMR" id="Q9FIW4"/>
<dbReference type="BioGRID" id="18907">
    <property type="interactions" value="1"/>
</dbReference>
<dbReference type="FunCoup" id="Q9FIW4">
    <property type="interactions" value="837"/>
</dbReference>
<dbReference type="STRING" id="3702.Q9FIW4"/>
<dbReference type="CAZy" id="GH1">
    <property type="family name" value="Glycoside Hydrolase Family 1"/>
</dbReference>
<dbReference type="GlyCosmos" id="Q9FIW4">
    <property type="glycosylation" value="1 site, No reported glycans"/>
</dbReference>
<dbReference type="GlyGen" id="Q9FIW4">
    <property type="glycosylation" value="1 site"/>
</dbReference>
<dbReference type="PaxDb" id="3702-AT5G36890.1"/>
<dbReference type="ProteomicsDB" id="240623">
    <molecule id="Q9FIW4-1"/>
</dbReference>
<dbReference type="EnsemblPlants" id="AT5G36890.1">
    <molecule id="Q9FIW4-1"/>
    <property type="protein sequence ID" value="AT5G36890.1"/>
    <property type="gene ID" value="AT5G36890"/>
</dbReference>
<dbReference type="EnsemblPlants" id="AT5G36890.2">
    <molecule id="Q9FIW4-2"/>
    <property type="protein sequence ID" value="AT5G36890.2"/>
    <property type="gene ID" value="AT5G36890"/>
</dbReference>
<dbReference type="GeneID" id="833656"/>
<dbReference type="Gramene" id="AT5G36890.1">
    <molecule id="Q9FIW4-1"/>
    <property type="protein sequence ID" value="AT5G36890.1"/>
    <property type="gene ID" value="AT5G36890"/>
</dbReference>
<dbReference type="Gramene" id="AT5G36890.2">
    <molecule id="Q9FIW4-2"/>
    <property type="protein sequence ID" value="AT5G36890.2"/>
    <property type="gene ID" value="AT5G36890"/>
</dbReference>
<dbReference type="KEGG" id="ath:AT5G36890"/>
<dbReference type="Araport" id="AT5G36890"/>
<dbReference type="TAIR" id="AT5G36890">
    <property type="gene designation" value="BGLU42"/>
</dbReference>
<dbReference type="eggNOG" id="KOG0626">
    <property type="taxonomic scope" value="Eukaryota"/>
</dbReference>
<dbReference type="InParanoid" id="Q9FIW4"/>
<dbReference type="OMA" id="HGSNDFY"/>
<dbReference type="PhylomeDB" id="Q9FIW4"/>
<dbReference type="BioCyc" id="ARA:AT5G36890-MONOMER"/>
<dbReference type="PRO" id="PR:Q9FIW4"/>
<dbReference type="Proteomes" id="UP000006548">
    <property type="component" value="Chromosome 5"/>
</dbReference>
<dbReference type="ExpressionAtlas" id="Q9FIW4">
    <property type="expression patterns" value="baseline and differential"/>
</dbReference>
<dbReference type="GO" id="GO:0005829">
    <property type="term" value="C:cytosol"/>
    <property type="evidence" value="ECO:0007005"/>
    <property type="project" value="TAIR"/>
</dbReference>
<dbReference type="GO" id="GO:0008422">
    <property type="term" value="F:beta-glucosidase activity"/>
    <property type="evidence" value="ECO:0007669"/>
    <property type="project" value="UniProtKB-EC"/>
</dbReference>
<dbReference type="GO" id="GO:0030245">
    <property type="term" value="P:cellulose catabolic process"/>
    <property type="evidence" value="ECO:0007669"/>
    <property type="project" value="InterPro"/>
</dbReference>
<dbReference type="GO" id="GO:0009866">
    <property type="term" value="P:induced systemic resistance, ethylene mediated signaling pathway"/>
    <property type="evidence" value="ECO:0000315"/>
    <property type="project" value="UniProtKB"/>
</dbReference>
<dbReference type="GO" id="GO:0031349">
    <property type="term" value="P:positive regulation of defense response"/>
    <property type="evidence" value="ECO:0000315"/>
    <property type="project" value="UniProtKB"/>
</dbReference>
<dbReference type="GO" id="GO:0009617">
    <property type="term" value="P:response to bacterium"/>
    <property type="evidence" value="ECO:0000270"/>
    <property type="project" value="UniProtKB"/>
</dbReference>
<dbReference type="GO" id="GO:1990641">
    <property type="term" value="P:response to iron ion starvation"/>
    <property type="evidence" value="ECO:0000315"/>
    <property type="project" value="UniProtKB"/>
</dbReference>
<dbReference type="GO" id="GO:0019748">
    <property type="term" value="P:secondary metabolic process"/>
    <property type="evidence" value="ECO:0000315"/>
    <property type="project" value="UniProtKB"/>
</dbReference>
<dbReference type="FunFam" id="3.20.20.80:FF:000022">
    <property type="entry name" value="Beta-glucosidase 11"/>
    <property type="match status" value="1"/>
</dbReference>
<dbReference type="Gene3D" id="3.20.20.80">
    <property type="entry name" value="Glycosidases"/>
    <property type="match status" value="1"/>
</dbReference>
<dbReference type="InterPro" id="IPR001360">
    <property type="entry name" value="Glyco_hydro_1"/>
</dbReference>
<dbReference type="InterPro" id="IPR017736">
    <property type="entry name" value="Glyco_hydro_1_beta-glucosidase"/>
</dbReference>
<dbReference type="InterPro" id="IPR033132">
    <property type="entry name" value="Glyco_hydro_1_N_CS"/>
</dbReference>
<dbReference type="InterPro" id="IPR017853">
    <property type="entry name" value="Glycoside_hydrolase_SF"/>
</dbReference>
<dbReference type="NCBIfam" id="TIGR03356">
    <property type="entry name" value="BGL"/>
    <property type="match status" value="1"/>
</dbReference>
<dbReference type="PANTHER" id="PTHR10353:SF310">
    <property type="entry name" value="BETA-GLUCOSIDASE 42"/>
    <property type="match status" value="1"/>
</dbReference>
<dbReference type="PANTHER" id="PTHR10353">
    <property type="entry name" value="GLYCOSYL HYDROLASE"/>
    <property type="match status" value="1"/>
</dbReference>
<dbReference type="Pfam" id="PF00232">
    <property type="entry name" value="Glyco_hydro_1"/>
    <property type="match status" value="1"/>
</dbReference>
<dbReference type="PRINTS" id="PR00131">
    <property type="entry name" value="GLHYDRLASE1"/>
</dbReference>
<dbReference type="SUPFAM" id="SSF51445">
    <property type="entry name" value="(Trans)glycosidases"/>
    <property type="match status" value="1"/>
</dbReference>
<dbReference type="PROSITE" id="PS00653">
    <property type="entry name" value="GLYCOSYL_HYDROL_F1_2"/>
    <property type="match status" value="1"/>
</dbReference>
<accession>Q9FIW4</accession>
<accession>Q2V330</accession>
<reference key="1">
    <citation type="journal article" date="1998" name="DNA Res.">
        <title>Structural analysis of Arabidopsis thaliana chromosome 5. VIII. Sequence features of the regions of 1,081,958 bp covered by seventeen physically assigned P1 and TAC clones.</title>
        <authorList>
            <person name="Asamizu E."/>
            <person name="Sato S."/>
            <person name="Kaneko T."/>
            <person name="Nakamura Y."/>
            <person name="Kotani H."/>
            <person name="Miyajima N."/>
            <person name="Tabata S."/>
        </authorList>
    </citation>
    <scope>NUCLEOTIDE SEQUENCE [LARGE SCALE GENOMIC DNA]</scope>
    <source>
        <strain>cv. Columbia</strain>
    </source>
</reference>
<reference key="2">
    <citation type="journal article" date="2017" name="Plant J.">
        <title>Araport11: a complete reannotation of the Arabidopsis thaliana reference genome.</title>
        <authorList>
            <person name="Cheng C.Y."/>
            <person name="Krishnakumar V."/>
            <person name="Chan A.P."/>
            <person name="Thibaud-Nissen F."/>
            <person name="Schobel S."/>
            <person name="Town C.D."/>
        </authorList>
    </citation>
    <scope>GENOME REANNOTATION</scope>
    <source>
        <strain>cv. Columbia</strain>
    </source>
</reference>
<reference key="3">
    <citation type="submission" date="2003-10" db="EMBL/GenBank/DDBJ databases">
        <title>Arabidopsis ORF clones.</title>
        <authorList>
            <person name="Cheuk R.F."/>
            <person name="Chen H."/>
            <person name="Kim C.J."/>
            <person name="Shinn P."/>
            <person name="Carninci P."/>
            <person name="Hayashizaki Y."/>
            <person name="Ishida J."/>
            <person name="Kamiya A."/>
            <person name="Kawai J."/>
            <person name="Narusaka M."/>
            <person name="Sakurai T."/>
            <person name="Satou M."/>
            <person name="Seki M."/>
            <person name="Shinozaki K."/>
            <person name="Ecker J.R."/>
        </authorList>
    </citation>
    <scope>NUCLEOTIDE SEQUENCE [LARGE SCALE MRNA] (ISOFORM 1)</scope>
    <source>
        <strain>cv. Columbia</strain>
    </source>
</reference>
<reference key="4">
    <citation type="submission" date="2004-09" db="EMBL/GenBank/DDBJ databases">
        <title>Large-scale analysis of RIKEN Arabidopsis full-length (RAFL) cDNAs.</title>
        <authorList>
            <person name="Totoki Y."/>
            <person name="Seki M."/>
            <person name="Ishida J."/>
            <person name="Nakajima M."/>
            <person name="Enju A."/>
            <person name="Kamiya A."/>
            <person name="Narusaka M."/>
            <person name="Shin-i T."/>
            <person name="Nakagawa M."/>
            <person name="Sakamoto N."/>
            <person name="Oishi K."/>
            <person name="Kohara Y."/>
            <person name="Kobayashi M."/>
            <person name="Toyoda A."/>
            <person name="Sakaki Y."/>
            <person name="Sakurai T."/>
            <person name="Iida K."/>
            <person name="Akiyama K."/>
            <person name="Satou M."/>
            <person name="Toyoda T."/>
            <person name="Konagaya A."/>
            <person name="Carninci P."/>
            <person name="Kawai J."/>
            <person name="Hayashizaki Y."/>
            <person name="Shinozaki K."/>
        </authorList>
    </citation>
    <scope>NUCLEOTIDE SEQUENCE [LARGE SCALE MRNA] (ISOFORM 1)</scope>
    <source>
        <strain>cv. Columbia</strain>
    </source>
</reference>
<reference key="5">
    <citation type="journal article" date="2004" name="Plant Mol. Biol.">
        <title>Functional genomic analysis of Arabidopsis thaliana glycoside hydrolase family 1.</title>
        <authorList>
            <person name="Xu Z."/>
            <person name="Escamilla-Trevino L.L."/>
            <person name="Zeng L."/>
            <person name="Lalgondar M."/>
            <person name="Bevan D.R."/>
            <person name="Winkel B.S.J."/>
            <person name="Mohamed A."/>
            <person name="Cheng C.-L."/>
            <person name="Shih M.-C."/>
            <person name="Poulton J.E."/>
            <person name="Esen A."/>
        </authorList>
    </citation>
    <scope>GENE FAMILY</scope>
    <scope>NOMENCLATURE</scope>
</reference>
<reference key="6">
    <citation type="journal article" date="2014" name="New Phytol.">
        <title>beta-Glucosidase BGLU42 is a MYB72-dependent key regulator of rhizobacteria-induced systemic resistance and modulates iron deficiency responses in Arabidopsis roots.</title>
        <authorList>
            <person name="Zamioudis C."/>
            <person name="Hanson J."/>
            <person name="Pieterse C.M.J."/>
        </authorList>
    </citation>
    <scope>FUNCTION</scope>
    <scope>DISRUPTION PHENOTYPE</scope>
    <scope>INDUCTION BY PSEUDOMONAS FLUORESCENS</scope>
    <scope>TISSUE SPECIFICITY</scope>
    <source>
        <strain>cv. Columbia</strain>
    </source>
</reference>
<reference key="7">
    <citation type="journal article" date="2022" name="Biosci. Biotechnol. Biochem.">
        <title>Substrate specificity of glycoside hydrolase family 1 beta-glucosidase AtBGlu42 from Arabidopsis thaliana and its molecular mechanism.</title>
        <authorList>
            <person name="Horikoshi S."/>
            <person name="Saburi W."/>
            <person name="Yu J."/>
            <person name="Matsuura H."/>
            <person name="Cairns J.R.K."/>
            <person name="Yao M."/>
            <person name="Mori H."/>
        </authorList>
    </citation>
    <scope>X-RAY CRYSTALLOGRAPHY (1.70 ANGSTROMS)</scope>
    <scope>FUNCTION</scope>
    <scope>MUTAGENESIS OF ARG-342</scope>
    <scope>CATALYTIC ACTIVITY</scope>
    <scope>BIOPHYSICOCHEMICAL PROPERTIES</scope>
    <source>
        <strain>cv. Columbia</strain>
    </source>
</reference>
<sequence length="490" mass="56077">MAQKLNLLNLAVPPVTHRSNFPSTFTFGVATSAYQIEGGWNEGKKGPSIWDKFTHIEGKILDGSNGDVAVDHYHRYKEDVDLIGQLGFGAYRFSISWSRIFPDGLGTEVNEEGIAFYNDLINTLLEKGIQPYVTLYHWDLPSHLQEAIGGWTNRKIVDYFGLYADACFANFGDRVKHWITLNEPLQTSVNGHCIGIFAPGRNEKPLIEPYLVSHHQVLAHATAVSIYRSKYKESQGGQIGLSVDCEWAEPNSEKPEDKVAADRRIDFQLGWFLDPLFFGDYPASMRQKLGDNLPRFTPEEKEFMLQNSWDFLGLNHYTSRLISHVSNKEAESNFYQAQELERIVELENGDLIGERAASDWLYAVPWGIRKTLNYMSKKYNHPPIFITENGMDDEDDGSASIHDMLDDKRRVDYFKSYLANVSQAIEDGVDIKGYFAWSLLDNFEWAQGYTKRFGLVYVDYKNGLTRHPKSSAYWFMKFLKGDEENKGKKE</sequence>
<comment type="function">
    <text evidence="7 8">Glucosidase that hydrolyzes scopolin and various beta-glucosides, cellooligosaccharides (mainly cellotriose) and laminarioligosaccharides (PubMed:34965581). Can use p-nitrophenyl-beta-glucosides (pNP beta-Glc) and p-nitrophenyl-beta-D-fucosides (pNP beta-D-Fuc) as substrates, and, to a lower extent, beta-galactosides, beta-mannosides and beta-xylosides (PubMed:34965581). Involved in the secretion of root-derived phenolics upon iron ions (Fe) depletion (PubMed:25138267). Promotes disease resistance toward B.cinerea, H.arabidopsidis and P.syringae pv. tomato DC3000 (PubMed:25138267). Required during rhizobacteria-mediated (e.g. P.fluorescens WCS417r) broad-spectrum induced systemic resistance (ISR) against several pathogens (PubMed:25138267).</text>
</comment>
<comment type="catalytic activity">
    <reaction evidence="8">
        <text>Hydrolysis of terminal, non-reducing beta-D-glucosyl residues with release of beta-D-glucose.</text>
        <dbReference type="EC" id="3.2.1.21"/>
    </reaction>
</comment>
<comment type="biophysicochemical properties">
    <kinetics>
        <KM evidence="8">0.142 mM for pNP beta-D-glucopyranoside</KM>
        <KM evidence="8">0.158 mM for pNP beta-D-fucopyranoside</KM>
        <KM evidence="8">9.93 mM for pNP beta-D-galactopyranoside</KM>
        <KM evidence="8">0.29 mM for pNP beta-D-mannopyranoside</KM>
        <KM evidence="8">1.62 mM for pNP beta-D-xylopyranoside</KM>
        <KM evidence="8">0.0978 mM for pNP beta-D-cellobioside</KM>
        <KM evidence="8">0.0827 mM for 4-methylumbelliferyl beta-D-glucopyranoside</KM>
        <KM evidence="8">0.0981 mM for scopolin</KM>
        <KM evidence="8">0.0657 mM for helicin</KM>
        <KM evidence="8">4.07 mM for cellobiose</KM>
        <KM evidence="8">0.126 mM for cellotriose</KM>
        <KM evidence="8">0.231 mM for cellotetraose</KM>
        <KM evidence="8">0.283 mM for cellopentaose</KM>
        <KM evidence="8">0.314 mM for cellohexaose</KM>
        <KM evidence="8">0.117 mM for laminaribiose</KM>
        <KM evidence="8">0.636 mM for laminaritriose</KM>
        <KM evidence="8">0.864 mM for sophorose</KM>
        <KM evidence="8">16.9 mM for gentiobiose</KM>
        <text evidence="8">kcat is 10.2 sec(-1) with pNP beta-D-glucopyranoside as substrate (PubMed:34965581). kcat is 12.9 sec(-1) with pNP beta-D-fucopyranoside as substrate (PubMed:34965581). kcat is 13.6 sec(-1) with pNP beta-D-galactopyranoside as substrate (PubMed:34965581). kcat is 0.233 sec(-1) with pNP beta-D-mannopyranoside as substrate (PubMed:34965581). kcat is 0.464 sec(-1) with pNP beta-D-xylopyranoside as substrate (PubMed:34965581). kcat is 9.4 sec(-1) with pNP beta-D-cellobioside as substrate (PubMed:34965581). kcat is 8.03 sec(-1) with 4-methylumbelliferyl beta-D-glucopyranoside as substrate (PubMed:34965581). kcat is 10.2 sec(-1) with scopolin as substrate (PubMed:34965581). kcat is 10.5 sec(-1) with helicin as substrate (PubMed:34965581). kcat is 6.42 sec(-1) with cellobiose as substrate (PubMed:34965581). kcat is 10.8 sec(-1) with cellotriose as substrate (PubMed:34965581). kcat is 10.3 sec(-1) with cellotetraose as substrate (PubMed:34965581). kcat is 10.2 sec(-1) with cellopentaose as substrate (PubMed:34965581). kcat is 9.67 sec(-1) with cellohexaose as substrate (PubMed:34965581). kcat is 11.1 sec(-1) with laminaribiose as substrate (PubMed:34965581). kcat is 10.7 sec(-1) with laminaritriose as substrate (PubMed:34965581). kcat is 11.9 sec(-1) with sophorose as substrate (PubMed:34965581). kcat is 0.543 sec(-1) with gentiobiose as substrate (PubMed:34965581).</text>
    </kinetics>
    <phDependence>
        <text evidence="8">Optimum pH is 6.8.</text>
    </phDependence>
    <temperatureDependence>
        <text evidence="8">Optimum temperature is 40 degrees Celsius.</text>
    </temperatureDependence>
</comment>
<comment type="alternative products">
    <event type="alternative splicing"/>
    <isoform>
        <id>Q9FIW4-1</id>
        <name>1</name>
        <sequence type="displayed"/>
    </isoform>
    <isoform>
        <id>Q9FIW4-2</id>
        <name>2</name>
        <sequence type="described" ref="VSP_038498 VSP_038499"/>
    </isoform>
</comment>
<comment type="tissue specificity">
    <text evidence="7">Expressed at low levels predominantly in root epidermal cells.</text>
</comment>
<comment type="induction">
    <text evidence="7">Accumulates upon rhizobacteria-mediated (e.g. P.fluorescens WCS417r) induced systemic resistance (ISR) in root trichoblasts and, to a lesser extent, in cortical cells.</text>
</comment>
<comment type="disruption phenotype">
    <text evidence="7">Reduced secretion of root-derived phenolics upon iron ions (Fe) depletion, thus leading to their accumulation in the root interior. Impaired P.fluorescens WCS417r-mediated broad-spectrum induced systemic resistance (ISR) against several pathogens.</text>
</comment>
<comment type="similarity">
    <text evidence="10">Belongs to the glycosyl hydrolase 1 family.</text>
</comment>
<protein>
    <recommendedName>
        <fullName evidence="9">Beta-glucosidase 42</fullName>
        <shortName evidence="9">AtBGLU42</shortName>
        <ecNumber evidence="8">3.2.1.21</ecNumber>
    </recommendedName>
</protein>
<organism>
    <name type="scientific">Arabidopsis thaliana</name>
    <name type="common">Mouse-ear cress</name>
    <dbReference type="NCBI Taxonomy" id="3702"/>
    <lineage>
        <taxon>Eukaryota</taxon>
        <taxon>Viridiplantae</taxon>
        <taxon>Streptophyta</taxon>
        <taxon>Embryophyta</taxon>
        <taxon>Tracheophyta</taxon>
        <taxon>Spermatophyta</taxon>
        <taxon>Magnoliopsida</taxon>
        <taxon>eudicotyledons</taxon>
        <taxon>Gunneridae</taxon>
        <taxon>Pentapetalae</taxon>
        <taxon>rosids</taxon>
        <taxon>malvids</taxon>
        <taxon>Brassicales</taxon>
        <taxon>Brassicaceae</taxon>
        <taxon>Camelineae</taxon>
        <taxon>Arabidopsis</taxon>
    </lineage>
</organism>
<proteinExistence type="evidence at protein level"/>
<keyword id="KW-0002">3D-structure</keyword>
<keyword id="KW-0025">Alternative splicing</keyword>
<keyword id="KW-0325">Glycoprotein</keyword>
<keyword id="KW-0326">Glycosidase</keyword>
<keyword id="KW-0378">Hydrolase</keyword>
<keyword id="KW-0611">Plant defense</keyword>
<keyword id="KW-1185">Reference proteome</keyword>
<keyword id="KW-0732">Signal</keyword>
<feature type="signal peptide" evidence="5">
    <location>
        <begin position="1"/>
        <end status="unknown"/>
    </location>
</feature>
<feature type="chain" id="PRO_0000390315" description="Beta-glucosidase 42">
    <location>
        <begin status="unknown"/>
        <end position="490"/>
    </location>
</feature>
<feature type="active site" description="Proton donor" evidence="3">
    <location>
        <position position="183"/>
    </location>
</feature>
<feature type="active site" description="Nucleophile" evidence="3">
    <location>
        <position position="388"/>
    </location>
</feature>
<feature type="binding site" evidence="3">
    <location>
        <position position="35"/>
    </location>
    <ligand>
        <name>a beta-D-glucoside</name>
        <dbReference type="ChEBI" id="CHEBI:22798"/>
    </ligand>
</feature>
<feature type="binding site" evidence="3">
    <location>
        <position position="137"/>
    </location>
    <ligand>
        <name>a beta-D-glucoside</name>
        <dbReference type="ChEBI" id="CHEBI:22798"/>
    </ligand>
</feature>
<feature type="binding site" evidence="2">
    <location>
        <begin position="182"/>
        <end position="183"/>
    </location>
    <ligand>
        <name>a beta-D-glucoside</name>
        <dbReference type="ChEBI" id="CHEBI:22798"/>
    </ligand>
</feature>
<feature type="binding site" evidence="3">
    <location>
        <position position="317"/>
    </location>
    <ligand>
        <name>a beta-D-glucoside</name>
        <dbReference type="ChEBI" id="CHEBI:22798"/>
    </ligand>
</feature>
<feature type="binding site" evidence="4">
    <location>
        <position position="388"/>
    </location>
    <ligand>
        <name>a beta-D-glucoside</name>
        <dbReference type="ChEBI" id="CHEBI:22798"/>
    </ligand>
</feature>
<feature type="binding site" evidence="3">
    <location>
        <position position="437"/>
    </location>
    <ligand>
        <name>a beta-D-glucoside</name>
        <dbReference type="ChEBI" id="CHEBI:22798"/>
    </ligand>
</feature>
<feature type="binding site" evidence="3">
    <location>
        <begin position="444"/>
        <end position="445"/>
    </location>
    <ligand>
        <name>a beta-D-glucoside</name>
        <dbReference type="ChEBI" id="CHEBI:22798"/>
    </ligand>
</feature>
<feature type="binding site" evidence="1">
    <location>
        <position position="453"/>
    </location>
    <ligand>
        <name>a beta-D-glucoside</name>
        <dbReference type="ChEBI" id="CHEBI:22798"/>
    </ligand>
</feature>
<feature type="site" description="Important for substrate chain length specificity" evidence="8">
    <location>
        <position position="342"/>
    </location>
</feature>
<feature type="glycosylation site" description="N-linked (GlcNAc...) asparagine" evidence="6">
    <location>
        <position position="420"/>
    </location>
</feature>
<feature type="splice variant" id="VSP_038498" description="In isoform 2." evidence="10">
    <original>G</original>
    <variation>E</variation>
    <location>
        <position position="487"/>
    </location>
</feature>
<feature type="splice variant" id="VSP_038499" description="In isoform 2." evidence="10">
    <location>
        <begin position="488"/>
        <end position="490"/>
    </location>
</feature>
<feature type="mutagenesis site" description="Highest preference on cellotetraose and cellopentaose with increased affinities at subsite (+)3." evidence="8">
    <original>R</original>
    <variation>A</variation>
    <variation>Y</variation>
    <location>
        <position position="342"/>
    </location>
</feature>
<feature type="helix" evidence="13">
    <location>
        <begin position="1"/>
        <end position="11"/>
    </location>
</feature>
<feature type="helix" evidence="13">
    <location>
        <begin position="18"/>
        <end position="20"/>
    </location>
</feature>
<feature type="strand" evidence="13">
    <location>
        <begin position="26"/>
        <end position="30"/>
    </location>
</feature>
<feature type="helix" evidence="13">
    <location>
        <begin position="33"/>
        <end position="36"/>
    </location>
</feature>
<feature type="helix" evidence="13">
    <location>
        <begin position="49"/>
        <end position="54"/>
    </location>
</feature>
<feature type="turn" evidence="13">
    <location>
        <begin position="66"/>
        <end position="70"/>
    </location>
</feature>
<feature type="helix" evidence="13">
    <location>
        <begin position="72"/>
        <end position="86"/>
    </location>
</feature>
<feature type="strand" evidence="13">
    <location>
        <begin position="89"/>
        <end position="94"/>
    </location>
</feature>
<feature type="helix" evidence="13">
    <location>
        <begin position="97"/>
        <end position="100"/>
    </location>
</feature>
<feature type="strand" evidence="13">
    <location>
        <begin position="106"/>
        <end position="108"/>
    </location>
</feature>
<feature type="helix" evidence="13">
    <location>
        <begin position="111"/>
        <end position="126"/>
    </location>
</feature>
<feature type="strand" evidence="13">
    <location>
        <begin position="130"/>
        <end position="138"/>
    </location>
</feature>
<feature type="helix" evidence="13">
    <location>
        <begin position="142"/>
        <end position="148"/>
    </location>
</feature>
<feature type="helix" evidence="13">
    <location>
        <begin position="150"/>
        <end position="152"/>
    </location>
</feature>
<feature type="helix" evidence="13">
    <location>
        <begin position="156"/>
        <end position="171"/>
    </location>
</feature>
<feature type="turn" evidence="13">
    <location>
        <begin position="172"/>
        <end position="174"/>
    </location>
</feature>
<feature type="strand" evidence="13">
    <location>
        <begin position="177"/>
        <end position="182"/>
    </location>
</feature>
<feature type="helix" evidence="13">
    <location>
        <begin position="184"/>
        <end position="192"/>
    </location>
</feature>
<feature type="turn" evidence="13">
    <location>
        <begin position="205"/>
        <end position="207"/>
    </location>
</feature>
<feature type="helix" evidence="13">
    <location>
        <begin position="208"/>
        <end position="230"/>
    </location>
</feature>
<feature type="helix" evidence="13">
    <location>
        <begin position="232"/>
        <end position="235"/>
    </location>
</feature>
<feature type="strand" evidence="13">
    <location>
        <begin position="238"/>
        <end position="244"/>
    </location>
</feature>
<feature type="strand" evidence="13">
    <location>
        <begin position="247"/>
        <end position="253"/>
    </location>
</feature>
<feature type="helix" evidence="13">
    <location>
        <begin position="255"/>
        <end position="268"/>
    </location>
</feature>
<feature type="helix" evidence="13">
    <location>
        <begin position="270"/>
        <end position="278"/>
    </location>
</feature>
<feature type="helix" evidence="13">
    <location>
        <begin position="283"/>
        <end position="289"/>
    </location>
</feature>
<feature type="helix" evidence="13">
    <location>
        <begin position="290"/>
        <end position="292"/>
    </location>
</feature>
<feature type="helix" evidence="13">
    <location>
        <begin position="298"/>
        <end position="306"/>
    </location>
</feature>
<feature type="strand" evidence="13">
    <location>
        <begin position="310"/>
        <end position="315"/>
    </location>
</feature>
<feature type="strand" evidence="13">
    <location>
        <begin position="319"/>
        <end position="324"/>
    </location>
</feature>
<feature type="helix" evidence="13">
    <location>
        <begin position="333"/>
        <end position="336"/>
    </location>
</feature>
<feature type="strand" evidence="13">
    <location>
        <begin position="340"/>
        <end position="343"/>
    </location>
</feature>
<feature type="strand" evidence="13">
    <location>
        <begin position="351"/>
        <end position="355"/>
    </location>
</feature>
<feature type="helix" evidence="13">
    <location>
        <begin position="366"/>
        <end position="378"/>
    </location>
</feature>
<feature type="strand" evidence="13">
    <location>
        <begin position="384"/>
        <end position="388"/>
    </location>
</feature>
<feature type="helix" evidence="13">
    <location>
        <begin position="401"/>
        <end position="405"/>
    </location>
</feature>
<feature type="helix" evidence="13">
    <location>
        <begin position="408"/>
        <end position="427"/>
    </location>
</feature>
<feature type="strand" evidence="13">
    <location>
        <begin position="431"/>
        <end position="437"/>
    </location>
</feature>
<feature type="helix" evidence="13">
    <location>
        <begin position="445"/>
        <end position="450"/>
    </location>
</feature>
<feature type="strand" evidence="13">
    <location>
        <begin position="455"/>
        <end position="459"/>
    </location>
</feature>
<feature type="turn" evidence="13">
    <location>
        <begin position="460"/>
        <end position="464"/>
    </location>
</feature>
<feature type="strand" evidence="13">
    <location>
        <begin position="465"/>
        <end position="468"/>
    </location>
</feature>
<feature type="helix" evidence="13">
    <location>
        <begin position="470"/>
        <end position="480"/>
    </location>
</feature>
<gene>
    <name evidence="9" type="primary">BGLU42</name>
    <name evidence="11" type="ordered locus">At5g36890</name>
    <name evidence="12" type="ORF">MLF18.1</name>
</gene>